<proteinExistence type="inferred from homology"/>
<feature type="chain" id="PRO_0000347735" description="Alanine--tRNA ligase">
    <location>
        <begin position="1"/>
        <end position="874"/>
    </location>
</feature>
<feature type="binding site" evidence="1">
    <location>
        <position position="562"/>
    </location>
    <ligand>
        <name>Zn(2+)</name>
        <dbReference type="ChEBI" id="CHEBI:29105"/>
    </ligand>
</feature>
<feature type="binding site" evidence="1">
    <location>
        <position position="566"/>
    </location>
    <ligand>
        <name>Zn(2+)</name>
        <dbReference type="ChEBI" id="CHEBI:29105"/>
    </ligand>
</feature>
<feature type="binding site" evidence="1">
    <location>
        <position position="665"/>
    </location>
    <ligand>
        <name>Zn(2+)</name>
        <dbReference type="ChEBI" id="CHEBI:29105"/>
    </ligand>
</feature>
<feature type="binding site" evidence="1">
    <location>
        <position position="669"/>
    </location>
    <ligand>
        <name>Zn(2+)</name>
        <dbReference type="ChEBI" id="CHEBI:29105"/>
    </ligand>
</feature>
<protein>
    <recommendedName>
        <fullName evidence="1">Alanine--tRNA ligase</fullName>
        <ecNumber evidence="1">6.1.1.7</ecNumber>
    </recommendedName>
    <alternativeName>
        <fullName evidence="1">Alanyl-tRNA synthetase</fullName>
        <shortName evidence="1">AlaRS</shortName>
    </alternativeName>
</protein>
<sequence length="874" mass="94600">MKSAEIREAFLRFFEEKGHTRVASSSLIPANDPTLLFTNAGMNQFKDCFLGLEKRAYTRATTSQKCVRAGGKHNDLENVGYTARHHTFFEMLGNFSFGDYFKRDAIHYAWEFLTGEKWLNLPKEKLWVTVYATDDEAYDIWTKEVGVPAERMVRIGDNKGAPYASDNFWAMGDTGPCGPCTEIFFDHGPDIWGGPPGSPEEDGDRYIEIWNNVFMQFNRTADGVMHPLPAPSVDTGMGLERVSAVLQHVHSNYEIDLFQNLLKASAEAIGCANDDAPSLKVVADHIRSCSFLIADGVLPSNEGRGYVLRRIIRRACRHGNKLGARGTFFHKIVAALVAEMGDAFPELKQQQAHIERVLKTEEEQFAKTLEQGLKILEQDLAELQGSVIPGNVVFKLYDTYGFPVDLTNDIARERELTIDEDGFEREMEAQRERARASSAFGMDYNSLVKVDGETRFLGYQGVSGAGQIVALFRDGQAVERLEEGEEGVVVLDQTPFYAESGGQVGDSGYLEAAGVRFDVRDTTKAGGAHLHHGVVAEGGLSVGAAVKAEVDASVRQATALNHSATHLLHAALRQVLGDHVQQKGSLVDSQRLRFDFSHFEAIKPEQLKALEDIVNAEIRRNTEVETEETDIDTAKAKGAMALFGEKYGDQVRVLSMGGDFSVELCGGTHVSRTGDIGLFKITSEGGVAAGVRRIEAVTGAAALAYLNGAEEQLKEAAGLVKGSRDNLLDKLGALLERNRSLEKELEQLKAKAASAAGDDLSAAAVDIKGAKVLAARLDGLDGKALLALVDQLKNKLGRAVILLGGELDGKVVLVAGVTQDLTGQLKAGELMKQAAAAVGGKGGGRPDMAQGGGTDAAKLDEALALAQRFVEQGL</sequence>
<organism>
    <name type="scientific">Pseudomonas paraeruginosa (strain DSM 24068 / PA7)</name>
    <name type="common">Pseudomonas aeruginosa (strain PA7)</name>
    <dbReference type="NCBI Taxonomy" id="381754"/>
    <lineage>
        <taxon>Bacteria</taxon>
        <taxon>Pseudomonadati</taxon>
        <taxon>Pseudomonadota</taxon>
        <taxon>Gammaproteobacteria</taxon>
        <taxon>Pseudomonadales</taxon>
        <taxon>Pseudomonadaceae</taxon>
        <taxon>Pseudomonas</taxon>
        <taxon>Pseudomonas paraeruginosa</taxon>
    </lineage>
</organism>
<reference key="1">
    <citation type="submission" date="2007-06" db="EMBL/GenBank/DDBJ databases">
        <authorList>
            <person name="Dodson R.J."/>
            <person name="Harkins D."/>
            <person name="Paulsen I.T."/>
        </authorList>
    </citation>
    <scope>NUCLEOTIDE SEQUENCE [LARGE SCALE GENOMIC DNA]</scope>
    <source>
        <strain>DSM 24068 / PA7</strain>
    </source>
</reference>
<gene>
    <name evidence="1" type="primary">alaS</name>
    <name type="ordered locus">PSPA7_4612</name>
</gene>
<name>SYA_PSEP7</name>
<keyword id="KW-0030">Aminoacyl-tRNA synthetase</keyword>
<keyword id="KW-0067">ATP-binding</keyword>
<keyword id="KW-0963">Cytoplasm</keyword>
<keyword id="KW-0436">Ligase</keyword>
<keyword id="KW-0479">Metal-binding</keyword>
<keyword id="KW-0547">Nucleotide-binding</keyword>
<keyword id="KW-0648">Protein biosynthesis</keyword>
<keyword id="KW-0694">RNA-binding</keyword>
<keyword id="KW-0820">tRNA-binding</keyword>
<keyword id="KW-0862">Zinc</keyword>
<comment type="function">
    <text evidence="1">Catalyzes the attachment of alanine to tRNA(Ala) in a two-step reaction: alanine is first activated by ATP to form Ala-AMP and then transferred to the acceptor end of tRNA(Ala). Also edits incorrectly charged Ser-tRNA(Ala) and Gly-tRNA(Ala) via its editing domain.</text>
</comment>
<comment type="catalytic activity">
    <reaction evidence="1">
        <text>tRNA(Ala) + L-alanine + ATP = L-alanyl-tRNA(Ala) + AMP + diphosphate</text>
        <dbReference type="Rhea" id="RHEA:12540"/>
        <dbReference type="Rhea" id="RHEA-COMP:9657"/>
        <dbReference type="Rhea" id="RHEA-COMP:9923"/>
        <dbReference type="ChEBI" id="CHEBI:30616"/>
        <dbReference type="ChEBI" id="CHEBI:33019"/>
        <dbReference type="ChEBI" id="CHEBI:57972"/>
        <dbReference type="ChEBI" id="CHEBI:78442"/>
        <dbReference type="ChEBI" id="CHEBI:78497"/>
        <dbReference type="ChEBI" id="CHEBI:456215"/>
        <dbReference type="EC" id="6.1.1.7"/>
    </reaction>
</comment>
<comment type="cofactor">
    <cofactor evidence="1">
        <name>Zn(2+)</name>
        <dbReference type="ChEBI" id="CHEBI:29105"/>
    </cofactor>
    <text evidence="1">Binds 1 zinc ion per subunit.</text>
</comment>
<comment type="subcellular location">
    <subcellularLocation>
        <location evidence="1">Cytoplasm</location>
    </subcellularLocation>
</comment>
<comment type="domain">
    <text evidence="1">Consists of three domains; the N-terminal catalytic domain, the editing domain and the C-terminal C-Ala domain. The editing domain removes incorrectly charged amino acids, while the C-Ala domain, along with tRNA(Ala), serves as a bridge to cooperatively bring together the editing and aminoacylation centers thus stimulating deacylation of misacylated tRNAs.</text>
</comment>
<comment type="similarity">
    <text evidence="1">Belongs to the class-II aminoacyl-tRNA synthetase family.</text>
</comment>
<accession>A6VA71</accession>
<evidence type="ECO:0000255" key="1">
    <source>
        <dbReference type="HAMAP-Rule" id="MF_00036"/>
    </source>
</evidence>
<dbReference type="EC" id="6.1.1.7" evidence="1"/>
<dbReference type="EMBL" id="CP000744">
    <property type="protein sequence ID" value="ABR85697.1"/>
    <property type="molecule type" value="Genomic_DNA"/>
</dbReference>
<dbReference type="RefSeq" id="WP_012076934.1">
    <property type="nucleotide sequence ID" value="NC_009656.1"/>
</dbReference>
<dbReference type="SMR" id="A6VA71"/>
<dbReference type="KEGG" id="pap:PSPA7_4612"/>
<dbReference type="HOGENOM" id="CLU_004485_1_1_6"/>
<dbReference type="Proteomes" id="UP000001582">
    <property type="component" value="Chromosome"/>
</dbReference>
<dbReference type="GO" id="GO:0005829">
    <property type="term" value="C:cytosol"/>
    <property type="evidence" value="ECO:0007669"/>
    <property type="project" value="TreeGrafter"/>
</dbReference>
<dbReference type="GO" id="GO:0004813">
    <property type="term" value="F:alanine-tRNA ligase activity"/>
    <property type="evidence" value="ECO:0007669"/>
    <property type="project" value="UniProtKB-UniRule"/>
</dbReference>
<dbReference type="GO" id="GO:0002161">
    <property type="term" value="F:aminoacyl-tRNA deacylase activity"/>
    <property type="evidence" value="ECO:0007669"/>
    <property type="project" value="TreeGrafter"/>
</dbReference>
<dbReference type="GO" id="GO:0005524">
    <property type="term" value="F:ATP binding"/>
    <property type="evidence" value="ECO:0007669"/>
    <property type="project" value="UniProtKB-UniRule"/>
</dbReference>
<dbReference type="GO" id="GO:0000049">
    <property type="term" value="F:tRNA binding"/>
    <property type="evidence" value="ECO:0007669"/>
    <property type="project" value="UniProtKB-KW"/>
</dbReference>
<dbReference type="GO" id="GO:0008270">
    <property type="term" value="F:zinc ion binding"/>
    <property type="evidence" value="ECO:0007669"/>
    <property type="project" value="UniProtKB-UniRule"/>
</dbReference>
<dbReference type="GO" id="GO:0006419">
    <property type="term" value="P:alanyl-tRNA aminoacylation"/>
    <property type="evidence" value="ECO:0007669"/>
    <property type="project" value="UniProtKB-UniRule"/>
</dbReference>
<dbReference type="GO" id="GO:0045892">
    <property type="term" value="P:negative regulation of DNA-templated transcription"/>
    <property type="evidence" value="ECO:0007669"/>
    <property type="project" value="TreeGrafter"/>
</dbReference>
<dbReference type="CDD" id="cd00673">
    <property type="entry name" value="AlaRS_core"/>
    <property type="match status" value="1"/>
</dbReference>
<dbReference type="FunFam" id="2.40.30.130:FF:000001">
    <property type="entry name" value="Alanine--tRNA ligase"/>
    <property type="match status" value="1"/>
</dbReference>
<dbReference type="FunFam" id="3.10.310.40:FF:000001">
    <property type="entry name" value="Alanine--tRNA ligase"/>
    <property type="match status" value="1"/>
</dbReference>
<dbReference type="FunFam" id="3.30.54.20:FF:000001">
    <property type="entry name" value="Alanine--tRNA ligase"/>
    <property type="match status" value="1"/>
</dbReference>
<dbReference type="FunFam" id="3.30.930.10:FF:000004">
    <property type="entry name" value="Alanine--tRNA ligase"/>
    <property type="match status" value="1"/>
</dbReference>
<dbReference type="FunFam" id="3.30.980.10:FF:000004">
    <property type="entry name" value="Alanine--tRNA ligase, cytoplasmic"/>
    <property type="match status" value="1"/>
</dbReference>
<dbReference type="Gene3D" id="2.40.30.130">
    <property type="match status" value="1"/>
</dbReference>
<dbReference type="Gene3D" id="3.10.310.40">
    <property type="match status" value="1"/>
</dbReference>
<dbReference type="Gene3D" id="3.30.54.20">
    <property type="match status" value="1"/>
</dbReference>
<dbReference type="Gene3D" id="6.10.250.550">
    <property type="match status" value="1"/>
</dbReference>
<dbReference type="Gene3D" id="3.30.930.10">
    <property type="entry name" value="Bira Bifunctional Protein, Domain 2"/>
    <property type="match status" value="1"/>
</dbReference>
<dbReference type="Gene3D" id="3.30.980.10">
    <property type="entry name" value="Threonyl-trna Synthetase, Chain A, domain 2"/>
    <property type="match status" value="1"/>
</dbReference>
<dbReference type="HAMAP" id="MF_00036_B">
    <property type="entry name" value="Ala_tRNA_synth_B"/>
    <property type="match status" value="1"/>
</dbReference>
<dbReference type="InterPro" id="IPR045864">
    <property type="entry name" value="aa-tRNA-synth_II/BPL/LPL"/>
</dbReference>
<dbReference type="InterPro" id="IPR002318">
    <property type="entry name" value="Ala-tRNA-lgiase_IIc"/>
</dbReference>
<dbReference type="InterPro" id="IPR018162">
    <property type="entry name" value="Ala-tRNA-ligase_IIc_anticod-bd"/>
</dbReference>
<dbReference type="InterPro" id="IPR018165">
    <property type="entry name" value="Ala-tRNA-synth_IIc_core"/>
</dbReference>
<dbReference type="InterPro" id="IPR018164">
    <property type="entry name" value="Ala-tRNA-synth_IIc_N"/>
</dbReference>
<dbReference type="InterPro" id="IPR050058">
    <property type="entry name" value="Ala-tRNA_ligase"/>
</dbReference>
<dbReference type="InterPro" id="IPR023033">
    <property type="entry name" value="Ala_tRNA_ligase_euk/bac"/>
</dbReference>
<dbReference type="InterPro" id="IPR003156">
    <property type="entry name" value="DHHA1_dom"/>
</dbReference>
<dbReference type="InterPro" id="IPR018163">
    <property type="entry name" value="Thr/Ala-tRNA-synth_IIc_edit"/>
</dbReference>
<dbReference type="InterPro" id="IPR009000">
    <property type="entry name" value="Transl_B-barrel_sf"/>
</dbReference>
<dbReference type="InterPro" id="IPR012947">
    <property type="entry name" value="tRNA_SAD"/>
</dbReference>
<dbReference type="NCBIfam" id="TIGR00344">
    <property type="entry name" value="alaS"/>
    <property type="match status" value="1"/>
</dbReference>
<dbReference type="PANTHER" id="PTHR11777:SF9">
    <property type="entry name" value="ALANINE--TRNA LIGASE, CYTOPLASMIC"/>
    <property type="match status" value="1"/>
</dbReference>
<dbReference type="PANTHER" id="PTHR11777">
    <property type="entry name" value="ALANYL-TRNA SYNTHETASE"/>
    <property type="match status" value="1"/>
</dbReference>
<dbReference type="Pfam" id="PF02272">
    <property type="entry name" value="DHHA1"/>
    <property type="match status" value="1"/>
</dbReference>
<dbReference type="Pfam" id="PF01411">
    <property type="entry name" value="tRNA-synt_2c"/>
    <property type="match status" value="1"/>
</dbReference>
<dbReference type="Pfam" id="PF07973">
    <property type="entry name" value="tRNA_SAD"/>
    <property type="match status" value="1"/>
</dbReference>
<dbReference type="PRINTS" id="PR00980">
    <property type="entry name" value="TRNASYNTHALA"/>
</dbReference>
<dbReference type="SMART" id="SM00863">
    <property type="entry name" value="tRNA_SAD"/>
    <property type="match status" value="1"/>
</dbReference>
<dbReference type="SUPFAM" id="SSF55681">
    <property type="entry name" value="Class II aaRS and biotin synthetases"/>
    <property type="match status" value="1"/>
</dbReference>
<dbReference type="SUPFAM" id="SSF101353">
    <property type="entry name" value="Putative anticodon-binding domain of alanyl-tRNA synthetase (AlaRS)"/>
    <property type="match status" value="1"/>
</dbReference>
<dbReference type="SUPFAM" id="SSF55186">
    <property type="entry name" value="ThrRS/AlaRS common domain"/>
    <property type="match status" value="1"/>
</dbReference>
<dbReference type="SUPFAM" id="SSF50447">
    <property type="entry name" value="Translation proteins"/>
    <property type="match status" value="1"/>
</dbReference>
<dbReference type="PROSITE" id="PS50860">
    <property type="entry name" value="AA_TRNA_LIGASE_II_ALA"/>
    <property type="match status" value="1"/>
</dbReference>